<feature type="signal peptide" evidence="1">
    <location>
        <begin position="1"/>
        <end position="37"/>
    </location>
</feature>
<feature type="chain" id="PRO_0000418581" description="Sistruxin chain A" evidence="1">
    <location>
        <begin position="38"/>
        <end position="77"/>
    </location>
</feature>
<feature type="propeptide" id="PRO_0000418582" evidence="1">
    <location>
        <begin position="78"/>
        <end position="83"/>
    </location>
</feature>
<feature type="chain" id="PRO_0000418583" description="Sistruxin chain B" evidence="1">
    <location>
        <begin position="84"/>
        <end position="118"/>
    </location>
</feature>
<feature type="propeptide" id="PRO_0000418584" evidence="1">
    <location>
        <begin position="119"/>
        <end position="124"/>
    </location>
</feature>
<feature type="chain" id="PRO_0000418585" description="Sistruxin chain C" evidence="1">
    <location>
        <begin position="125"/>
        <end position="138"/>
    </location>
</feature>
<feature type="modified residue" description="Pyrrolidone carboxylic acid" evidence="1">
    <location>
        <position position="84"/>
    </location>
</feature>
<feature type="disulfide bond" evidence="1">
    <location>
        <begin position="42"/>
        <end position="131"/>
    </location>
</feature>
<feature type="disulfide bond" evidence="1">
    <location>
        <begin position="44"/>
        <end position="60"/>
    </location>
</feature>
<feature type="disulfide bond" evidence="1">
    <location>
        <begin position="59"/>
        <end position="111"/>
    </location>
</feature>
<feature type="disulfide bond" evidence="1">
    <location>
        <begin position="65"/>
        <end position="138"/>
    </location>
</feature>
<feature type="disulfide bond" evidence="1">
    <location>
        <begin position="66"/>
        <end position="104"/>
    </location>
</feature>
<feature type="disulfide bond" evidence="1">
    <location>
        <begin position="73"/>
        <end position="97"/>
    </location>
</feature>
<feature type="disulfide bond" evidence="1">
    <location>
        <begin position="91"/>
        <end position="102"/>
    </location>
</feature>
<sequence length="138" mass="15429">MRALWIVAVLLLGVEGSLVEFETLIMKIAGRSGVWYYSSYGCYCGTGGQGWPQDASDRCCFEHDCCYAKLTGCDPITDVYTYRQEDGEIVCGGEDPCGTQICECDKAAAICFRDSMDTYNHKYWRFSLENCQGESQPC</sequence>
<protein>
    <recommendedName>
        <fullName>Acidic phospholipase A2 homolog sistruxin A</fullName>
        <shortName>SA</shortName>
        <shortName>svPLA2</shortName>
    </recommendedName>
    <component>
        <recommendedName>
            <fullName>Sistruxin chain A</fullName>
        </recommendedName>
    </component>
    <component>
        <recommendedName>
            <fullName>Sistruxin chain B</fullName>
        </recommendedName>
    </component>
    <component>
        <recommendedName>
            <fullName>Sistruxin chain C</fullName>
        </recommendedName>
    </component>
</protein>
<organism>
    <name type="scientific">Sistrurus tergeminus</name>
    <name type="common">Western massasauga</name>
    <name type="synonym">Sistrurus catenatus tergeminus</name>
    <dbReference type="NCBI Taxonomy" id="8757"/>
    <lineage>
        <taxon>Eukaryota</taxon>
        <taxon>Metazoa</taxon>
        <taxon>Chordata</taxon>
        <taxon>Craniata</taxon>
        <taxon>Vertebrata</taxon>
        <taxon>Euteleostomi</taxon>
        <taxon>Lepidosauria</taxon>
        <taxon>Squamata</taxon>
        <taxon>Bifurcata</taxon>
        <taxon>Unidentata</taxon>
        <taxon>Episquamata</taxon>
        <taxon>Toxicofera</taxon>
        <taxon>Serpentes</taxon>
        <taxon>Colubroidea</taxon>
        <taxon>Viperidae</taxon>
        <taxon>Crotalinae</taxon>
        <taxon>Sistrurus</taxon>
    </lineage>
</organism>
<comment type="function">
    <text evidence="1">Snake venom phospholipase A2 (PLA2) that inhibits neuromuscular transmission by blocking acetylcholine release from the nerve termini.</text>
</comment>
<comment type="subunit">
    <text evidence="1">Heterodimer of an acidic subunit and a basic chain. The acidic subunit is non-toxic, without enzymatic activity and comprises 3 peptides that are cross-linked by 7 disulfide bridges. The basic subunit is toxic, has phospholipase A2 activity and is composed of a single chain (By similarity).</text>
</comment>
<comment type="subcellular location">
    <subcellularLocation>
        <location evidence="1">Secreted</location>
    </subcellularLocation>
</comment>
<comment type="tissue specificity">
    <text>Expressed by the venom gland.</text>
</comment>
<comment type="similarity">
    <text evidence="2">Belongs to the phospholipase A2 family. Group II subfamily. D49 sub-subfamily.</text>
</comment>
<dbReference type="EMBL" id="AY508693">
    <property type="protein sequence ID" value="AAS79431.1"/>
    <property type="molecule type" value="mRNA"/>
</dbReference>
<dbReference type="SMR" id="Q6EAN6"/>
<dbReference type="GO" id="GO:0005576">
    <property type="term" value="C:extracellular region"/>
    <property type="evidence" value="ECO:0007669"/>
    <property type="project" value="UniProtKB-SubCell"/>
</dbReference>
<dbReference type="GO" id="GO:0005509">
    <property type="term" value="F:calcium ion binding"/>
    <property type="evidence" value="ECO:0007669"/>
    <property type="project" value="InterPro"/>
</dbReference>
<dbReference type="GO" id="GO:0047498">
    <property type="term" value="F:calcium-dependent phospholipase A2 activity"/>
    <property type="evidence" value="ECO:0007669"/>
    <property type="project" value="TreeGrafter"/>
</dbReference>
<dbReference type="GO" id="GO:0005543">
    <property type="term" value="F:phospholipid binding"/>
    <property type="evidence" value="ECO:0007669"/>
    <property type="project" value="TreeGrafter"/>
</dbReference>
<dbReference type="GO" id="GO:0090729">
    <property type="term" value="F:toxin activity"/>
    <property type="evidence" value="ECO:0007669"/>
    <property type="project" value="UniProtKB-KW"/>
</dbReference>
<dbReference type="GO" id="GO:0050482">
    <property type="term" value="P:arachidonate secretion"/>
    <property type="evidence" value="ECO:0007669"/>
    <property type="project" value="InterPro"/>
</dbReference>
<dbReference type="GO" id="GO:0016042">
    <property type="term" value="P:lipid catabolic process"/>
    <property type="evidence" value="ECO:0007669"/>
    <property type="project" value="InterPro"/>
</dbReference>
<dbReference type="GO" id="GO:0042130">
    <property type="term" value="P:negative regulation of T cell proliferation"/>
    <property type="evidence" value="ECO:0007669"/>
    <property type="project" value="TreeGrafter"/>
</dbReference>
<dbReference type="GO" id="GO:0006644">
    <property type="term" value="P:phospholipid metabolic process"/>
    <property type="evidence" value="ECO:0007669"/>
    <property type="project" value="InterPro"/>
</dbReference>
<dbReference type="CDD" id="cd00125">
    <property type="entry name" value="PLA2c"/>
    <property type="match status" value="1"/>
</dbReference>
<dbReference type="FunFam" id="1.20.90.10:FF:000001">
    <property type="entry name" value="Basic phospholipase A2 homolog"/>
    <property type="match status" value="1"/>
</dbReference>
<dbReference type="Gene3D" id="1.20.90.10">
    <property type="entry name" value="Phospholipase A2 domain"/>
    <property type="match status" value="1"/>
</dbReference>
<dbReference type="InterPro" id="IPR001211">
    <property type="entry name" value="PLipase_A2"/>
</dbReference>
<dbReference type="InterPro" id="IPR033112">
    <property type="entry name" value="PLipase_A2_Asp_AS"/>
</dbReference>
<dbReference type="InterPro" id="IPR016090">
    <property type="entry name" value="PLipase_A2_dom"/>
</dbReference>
<dbReference type="InterPro" id="IPR036444">
    <property type="entry name" value="PLipase_A2_dom_sf"/>
</dbReference>
<dbReference type="InterPro" id="IPR033113">
    <property type="entry name" value="PLipase_A2_His_AS"/>
</dbReference>
<dbReference type="PANTHER" id="PTHR11716">
    <property type="entry name" value="PHOSPHOLIPASE A2 FAMILY MEMBER"/>
    <property type="match status" value="1"/>
</dbReference>
<dbReference type="PANTHER" id="PTHR11716:SF9">
    <property type="entry name" value="PHOSPHOLIPASE A2, MEMBRANE ASSOCIATED"/>
    <property type="match status" value="1"/>
</dbReference>
<dbReference type="Pfam" id="PF00068">
    <property type="entry name" value="Phospholip_A2_1"/>
    <property type="match status" value="1"/>
</dbReference>
<dbReference type="PRINTS" id="PR00389">
    <property type="entry name" value="PHPHLIPASEA2"/>
</dbReference>
<dbReference type="SMART" id="SM00085">
    <property type="entry name" value="PA2c"/>
    <property type="match status" value="1"/>
</dbReference>
<dbReference type="SUPFAM" id="SSF48619">
    <property type="entry name" value="Phospholipase A2, PLA2"/>
    <property type="match status" value="1"/>
</dbReference>
<dbReference type="PROSITE" id="PS00119">
    <property type="entry name" value="PA2_ASP"/>
    <property type="match status" value="1"/>
</dbReference>
<dbReference type="PROSITE" id="PS00118">
    <property type="entry name" value="PA2_HIS"/>
    <property type="match status" value="1"/>
</dbReference>
<name>PA2HA_SISTE</name>
<accession>Q6EAN6</accession>
<reference key="1">
    <citation type="journal article" date="2004" name="Biochem. J.">
        <title>Molecular evolution and structure-function relationships of crotoxin-like and asparagine-6-containing phospholipases A2 in pit viper venoms.</title>
        <authorList>
            <person name="Chen Y.-H."/>
            <person name="Wang Y.-M."/>
            <person name="Hseu M.-J."/>
            <person name="Tsai I.-H."/>
        </authorList>
    </citation>
    <scope>NUCLEOTIDE SEQUENCE [MRNA]</scope>
    <source>
        <tissue>Venom gland</tissue>
    </source>
</reference>
<proteinExistence type="evidence at transcript level"/>
<keyword id="KW-1015">Disulfide bond</keyword>
<keyword id="KW-0528">Neurotoxin</keyword>
<keyword id="KW-0638">Presynaptic neurotoxin</keyword>
<keyword id="KW-0873">Pyrrolidone carboxylic acid</keyword>
<keyword id="KW-0964">Secreted</keyword>
<keyword id="KW-0732">Signal</keyword>
<keyword id="KW-0800">Toxin</keyword>
<evidence type="ECO:0000250" key="1"/>
<evidence type="ECO:0000305" key="2"/>